<sequence length="280" mass="30855">MDLYNNKNSDTSKIKRDASVNDRIPDGLFLACPYCGAQMYNKQLGKYRVCAKCNYGFRLQAWERVELLTKNFEEMDSDIQMDHPEFPGYAEKLKRAQSQTELAESVLTGTADIEGEQVALGIMDSYFMMGSLGSMTGEKITRLFEYATAHTLPVVLFTASGGARMQEGIDSLMQMAKVSAAVAAHQEAKLLYLVVLTDPTTGGVTASFAMQGDVTLAEPHALVGFAGARVIESTIHEKLPKDFQRVETLLENGFVDQIVPRSELAQLIAKIVRLHTAEAE</sequence>
<proteinExistence type="inferred from homology"/>
<comment type="function">
    <text evidence="1">Component of the acetyl coenzyme A carboxylase (ACC) complex. Biotin carboxylase (BC) catalyzes the carboxylation of biotin on its carrier protein (BCCP) and then the CO(2) group is transferred by the transcarboxylase to acetyl-CoA to form malonyl-CoA.</text>
</comment>
<comment type="catalytic activity">
    <reaction evidence="1">
        <text>N(6)-carboxybiotinyl-L-lysyl-[protein] + acetyl-CoA = N(6)-biotinyl-L-lysyl-[protein] + malonyl-CoA</text>
        <dbReference type="Rhea" id="RHEA:54728"/>
        <dbReference type="Rhea" id="RHEA-COMP:10505"/>
        <dbReference type="Rhea" id="RHEA-COMP:10506"/>
        <dbReference type="ChEBI" id="CHEBI:57288"/>
        <dbReference type="ChEBI" id="CHEBI:57384"/>
        <dbReference type="ChEBI" id="CHEBI:83144"/>
        <dbReference type="ChEBI" id="CHEBI:83145"/>
        <dbReference type="EC" id="2.1.3.15"/>
    </reaction>
</comment>
<comment type="cofactor">
    <cofactor evidence="1">
        <name>Zn(2+)</name>
        <dbReference type="ChEBI" id="CHEBI:29105"/>
    </cofactor>
    <text evidence="1">Binds 1 zinc ion per subunit.</text>
</comment>
<comment type="pathway">
    <text evidence="1">Lipid metabolism; malonyl-CoA biosynthesis; malonyl-CoA from acetyl-CoA: step 1/1.</text>
</comment>
<comment type="subunit">
    <text evidence="1">Acetyl-CoA carboxylase is a heterohexamer composed of biotin carboxyl carrier protein (AccB), biotin carboxylase (AccC) and two subunits each of ACCase subunit alpha (AccA) and ACCase subunit beta (AccD).</text>
</comment>
<comment type="subcellular location">
    <subcellularLocation>
        <location evidence="1">Cytoplasm</location>
    </subcellularLocation>
</comment>
<comment type="similarity">
    <text evidence="1">Belongs to the AccD/PCCB family.</text>
</comment>
<name>ACCD_LEUMM</name>
<reference key="1">
    <citation type="journal article" date="2006" name="Proc. Natl. Acad. Sci. U.S.A.">
        <title>Comparative genomics of the lactic acid bacteria.</title>
        <authorList>
            <person name="Makarova K.S."/>
            <person name="Slesarev A."/>
            <person name="Wolf Y.I."/>
            <person name="Sorokin A."/>
            <person name="Mirkin B."/>
            <person name="Koonin E.V."/>
            <person name="Pavlov A."/>
            <person name="Pavlova N."/>
            <person name="Karamychev V."/>
            <person name="Polouchine N."/>
            <person name="Shakhova V."/>
            <person name="Grigoriev I."/>
            <person name="Lou Y."/>
            <person name="Rohksar D."/>
            <person name="Lucas S."/>
            <person name="Huang K."/>
            <person name="Goodstein D.M."/>
            <person name="Hawkins T."/>
            <person name="Plengvidhya V."/>
            <person name="Welker D."/>
            <person name="Hughes J."/>
            <person name="Goh Y."/>
            <person name="Benson A."/>
            <person name="Baldwin K."/>
            <person name="Lee J.-H."/>
            <person name="Diaz-Muniz I."/>
            <person name="Dosti B."/>
            <person name="Smeianov V."/>
            <person name="Wechter W."/>
            <person name="Barabote R."/>
            <person name="Lorca G."/>
            <person name="Altermann E."/>
            <person name="Barrangou R."/>
            <person name="Ganesan B."/>
            <person name="Xie Y."/>
            <person name="Rawsthorne H."/>
            <person name="Tamir D."/>
            <person name="Parker C."/>
            <person name="Breidt F."/>
            <person name="Broadbent J.R."/>
            <person name="Hutkins R."/>
            <person name="O'Sullivan D."/>
            <person name="Steele J."/>
            <person name="Unlu G."/>
            <person name="Saier M.H. Jr."/>
            <person name="Klaenhammer T."/>
            <person name="Richardson P."/>
            <person name="Kozyavkin S."/>
            <person name="Weimer B.C."/>
            <person name="Mills D.A."/>
        </authorList>
    </citation>
    <scope>NUCLEOTIDE SEQUENCE [LARGE SCALE GENOMIC DNA]</scope>
    <source>
        <strain>ATCC 8293 / DSM 20343 / BCRC 11652 / CCM 1803 / JCM 6124 / NCDO 523 / NBRC 100496 / NCIMB 8023 / NCTC 12954 / NRRL B-1118 / 37Y</strain>
    </source>
</reference>
<feature type="chain" id="PRO_0000389779" description="Acetyl-coenzyme A carboxylase carboxyl transferase subunit beta">
    <location>
        <begin position="1"/>
        <end position="280"/>
    </location>
</feature>
<feature type="domain" description="CoA carboxyltransferase N-terminal" evidence="2">
    <location>
        <begin position="28"/>
        <end position="280"/>
    </location>
</feature>
<feature type="zinc finger region" description="C4-type" evidence="1">
    <location>
        <begin position="32"/>
        <end position="53"/>
    </location>
</feature>
<feature type="binding site" evidence="1">
    <location>
        <position position="32"/>
    </location>
    <ligand>
        <name>Zn(2+)</name>
        <dbReference type="ChEBI" id="CHEBI:29105"/>
    </ligand>
</feature>
<feature type="binding site" evidence="1">
    <location>
        <position position="35"/>
    </location>
    <ligand>
        <name>Zn(2+)</name>
        <dbReference type="ChEBI" id="CHEBI:29105"/>
    </ligand>
</feature>
<feature type="binding site" evidence="1">
    <location>
        <position position="50"/>
    </location>
    <ligand>
        <name>Zn(2+)</name>
        <dbReference type="ChEBI" id="CHEBI:29105"/>
    </ligand>
</feature>
<feature type="binding site" evidence="1">
    <location>
        <position position="53"/>
    </location>
    <ligand>
        <name>Zn(2+)</name>
        <dbReference type="ChEBI" id="CHEBI:29105"/>
    </ligand>
</feature>
<protein>
    <recommendedName>
        <fullName evidence="1">Acetyl-coenzyme A carboxylase carboxyl transferase subunit beta</fullName>
        <shortName evidence="1">ACCase subunit beta</shortName>
        <shortName evidence="1">Acetyl-CoA carboxylase carboxyltransferase subunit beta</shortName>
        <ecNumber evidence="1">2.1.3.15</ecNumber>
    </recommendedName>
</protein>
<organism>
    <name type="scientific">Leuconostoc mesenteroides subsp. mesenteroides (strain ATCC 8293 / DSM 20343 / BCRC 11652 / CCM 1803 / JCM 6124 / NCDO 523 / NBRC 100496 / NCIMB 8023 / NCTC 12954 / NRRL B-1118 / 37Y)</name>
    <dbReference type="NCBI Taxonomy" id="203120"/>
    <lineage>
        <taxon>Bacteria</taxon>
        <taxon>Bacillati</taxon>
        <taxon>Bacillota</taxon>
        <taxon>Bacilli</taxon>
        <taxon>Lactobacillales</taxon>
        <taxon>Lactobacillaceae</taxon>
        <taxon>Leuconostoc</taxon>
    </lineage>
</organism>
<accession>Q03ZC9</accession>
<dbReference type="EC" id="2.1.3.15" evidence="1"/>
<dbReference type="EMBL" id="CP000414">
    <property type="protein sequence ID" value="ABJ61443.1"/>
    <property type="molecule type" value="Genomic_DNA"/>
</dbReference>
<dbReference type="RefSeq" id="WP_011679197.1">
    <property type="nucleotide sequence ID" value="NC_008531.1"/>
</dbReference>
<dbReference type="SMR" id="Q03ZC9"/>
<dbReference type="EnsemblBacteria" id="ABJ61443">
    <property type="protein sequence ID" value="ABJ61443"/>
    <property type="gene ID" value="LEUM_0318"/>
</dbReference>
<dbReference type="GeneID" id="29576429"/>
<dbReference type="KEGG" id="lme:LEUM_0318"/>
<dbReference type="eggNOG" id="COG0777">
    <property type="taxonomic scope" value="Bacteria"/>
</dbReference>
<dbReference type="HOGENOM" id="CLU_015486_1_1_9"/>
<dbReference type="UniPathway" id="UPA00655">
    <property type="reaction ID" value="UER00711"/>
</dbReference>
<dbReference type="Proteomes" id="UP000000362">
    <property type="component" value="Chromosome"/>
</dbReference>
<dbReference type="GO" id="GO:0009317">
    <property type="term" value="C:acetyl-CoA carboxylase complex"/>
    <property type="evidence" value="ECO:0007669"/>
    <property type="project" value="InterPro"/>
</dbReference>
<dbReference type="GO" id="GO:0003989">
    <property type="term" value="F:acetyl-CoA carboxylase activity"/>
    <property type="evidence" value="ECO:0007669"/>
    <property type="project" value="InterPro"/>
</dbReference>
<dbReference type="GO" id="GO:0005524">
    <property type="term" value="F:ATP binding"/>
    <property type="evidence" value="ECO:0007669"/>
    <property type="project" value="UniProtKB-KW"/>
</dbReference>
<dbReference type="GO" id="GO:0016743">
    <property type="term" value="F:carboxyl- or carbamoyltransferase activity"/>
    <property type="evidence" value="ECO:0007669"/>
    <property type="project" value="UniProtKB-UniRule"/>
</dbReference>
<dbReference type="GO" id="GO:0008270">
    <property type="term" value="F:zinc ion binding"/>
    <property type="evidence" value="ECO:0007669"/>
    <property type="project" value="UniProtKB-UniRule"/>
</dbReference>
<dbReference type="GO" id="GO:0006633">
    <property type="term" value="P:fatty acid biosynthetic process"/>
    <property type="evidence" value="ECO:0007669"/>
    <property type="project" value="UniProtKB-KW"/>
</dbReference>
<dbReference type="GO" id="GO:2001295">
    <property type="term" value="P:malonyl-CoA biosynthetic process"/>
    <property type="evidence" value="ECO:0007669"/>
    <property type="project" value="UniProtKB-UniRule"/>
</dbReference>
<dbReference type="Gene3D" id="3.90.226.10">
    <property type="entry name" value="2-enoyl-CoA Hydratase, Chain A, domain 1"/>
    <property type="match status" value="1"/>
</dbReference>
<dbReference type="HAMAP" id="MF_01395">
    <property type="entry name" value="AcetylCoA_CT_beta"/>
    <property type="match status" value="1"/>
</dbReference>
<dbReference type="InterPro" id="IPR034733">
    <property type="entry name" value="AcCoA_carboxyl_beta"/>
</dbReference>
<dbReference type="InterPro" id="IPR000438">
    <property type="entry name" value="Acetyl_CoA_COase_Trfase_b_su"/>
</dbReference>
<dbReference type="InterPro" id="IPR029045">
    <property type="entry name" value="ClpP/crotonase-like_dom_sf"/>
</dbReference>
<dbReference type="InterPro" id="IPR011762">
    <property type="entry name" value="COA_CT_N"/>
</dbReference>
<dbReference type="PANTHER" id="PTHR42995">
    <property type="entry name" value="ACETYL-COENZYME A CARBOXYLASE CARBOXYL TRANSFERASE SUBUNIT BETA, CHLOROPLASTIC"/>
    <property type="match status" value="1"/>
</dbReference>
<dbReference type="PANTHER" id="PTHR42995:SF5">
    <property type="entry name" value="ACETYL-COENZYME A CARBOXYLASE CARBOXYL TRANSFERASE SUBUNIT BETA, CHLOROPLASTIC"/>
    <property type="match status" value="1"/>
</dbReference>
<dbReference type="Pfam" id="PF01039">
    <property type="entry name" value="Carboxyl_trans"/>
    <property type="match status" value="1"/>
</dbReference>
<dbReference type="PRINTS" id="PR01070">
    <property type="entry name" value="ACCCTRFRASEB"/>
</dbReference>
<dbReference type="SUPFAM" id="SSF52096">
    <property type="entry name" value="ClpP/crotonase"/>
    <property type="match status" value="1"/>
</dbReference>
<dbReference type="PROSITE" id="PS50980">
    <property type="entry name" value="COA_CT_NTER"/>
    <property type="match status" value="1"/>
</dbReference>
<keyword id="KW-0067">ATP-binding</keyword>
<keyword id="KW-0963">Cytoplasm</keyword>
<keyword id="KW-0275">Fatty acid biosynthesis</keyword>
<keyword id="KW-0276">Fatty acid metabolism</keyword>
<keyword id="KW-0444">Lipid biosynthesis</keyword>
<keyword id="KW-0443">Lipid metabolism</keyword>
<keyword id="KW-0479">Metal-binding</keyword>
<keyword id="KW-0547">Nucleotide-binding</keyword>
<keyword id="KW-1185">Reference proteome</keyword>
<keyword id="KW-0808">Transferase</keyword>
<keyword id="KW-0862">Zinc</keyword>
<keyword id="KW-0863">Zinc-finger</keyword>
<evidence type="ECO:0000255" key="1">
    <source>
        <dbReference type="HAMAP-Rule" id="MF_01395"/>
    </source>
</evidence>
<evidence type="ECO:0000255" key="2">
    <source>
        <dbReference type="PROSITE-ProRule" id="PRU01136"/>
    </source>
</evidence>
<gene>
    <name evidence="1" type="primary">accD</name>
    <name type="ordered locus">LEUM_0318</name>
</gene>